<keyword id="KW-0238">DNA-binding</keyword>
<keyword id="KW-1048">Host nucleus</keyword>
<keyword id="KW-0928">Hypersensitive response elicitation</keyword>
<keyword id="KW-0677">Repeat</keyword>
<keyword id="KW-0964">Secreted</keyword>
<keyword id="KW-0804">Transcription</keyword>
<keyword id="KW-0805">Transcription regulation</keyword>
<keyword id="KW-0843">Virulence</keyword>
<gene>
    <name evidence="10" type="primary">avrXa10</name>
</gene>
<sequence>MDPIRSRTPSPARELLPGPQPDRVQPTADRGGAPPAGGPLDGLPARRTMSRTRLPSPPAPSPAFSAGSFSDLLRQFDPSLLDTSLLDSMPAVGTPHTAAAPAECDEVQSGLRAADDPPPTVRVAVTARPPRAKPAPRRRAAQPSDASPAAQVDLRTLGYSQQQQEKIKPKVRSTVAQHHEALVGHGFTHAHIVALSQHPAALGTVAVTYQDIIRALPEATHEDIVGVGKQWSGARALEALLTEAGELRGPPLQLDTGQLLKIAKRGGVTAVEAVHAWRNALTGAPLNLTPDQVVAIASNIGGNQALETVQRLLPVLCQAHGLTPDQVVAIASHGGGKQALETVQRLLPVLCQAHGLTPDQVVAIASNIGGKQALATVQRLLPVLCQDHGLTPDQVVAIASHGGGKQALETVQRLLPVLCQDHGLTPDQVVAIASNIGGKQALETVQRLLPVLCQDHGLTPDQVVAIASNIGGKQALETVQRLLPVLCQDHGLTPDQVVAIASNNGGKQALETVQRLLPVLCQTHGLTPDQVVAIANHDGGKQALETVQRLLPVLCQDHGLTPDQVVAIASNIGGKQALATVQRLLPVLCQAHGLTPDQVVAIASHDGGKQALETVQRLLPVLCQDHGLTPDQVVAIASNNGGKQALETVQRLLPVLCQDHGLTPAQVVAIANHGGGKQALETVQRLLPVLCQDHGLTPVQVVAIASNSGGKQALETVQRLLPVLCQDHGLTPVQVVAIASNGGGKQALATVQRLLPVLCQDHGLTPVQVVAIASHDGGKQALETVQRLLPVLCQDHGLTPDQVVAIASNGGKQALESIVAQLSRPDPALAALTNDHLVALACLGGRPALDAVKKGLPHAPELIRRINRRIPERTSHRVADLAHVVRVLGFFQSHSHPAQAFDDAMTQFGMSRHGLAQLFRRVGVTELEARYGTLPPASQRWDRILQASGMKRVKPSPTSAQTPDQASLHAFADSLERDLDAPSPMHEGDQTRASSRKRSRSDRAVTGPSTQQSFEVRVPEQQDALHLPLSWRVKRPRTRIGGGLPDPGTPIAADLAASSTVMWEQDAAPFAGAADDFPAFNEEELAWLMELLPQSGSVGGTI</sequence>
<dbReference type="EMBL" id="U50552">
    <property type="protein sequence ID" value="AAA92974.1"/>
    <property type="molecule type" value="Genomic_DNA"/>
</dbReference>
<dbReference type="SMR" id="Q56830"/>
<dbReference type="GO" id="GO:0005576">
    <property type="term" value="C:extracellular region"/>
    <property type="evidence" value="ECO:0007669"/>
    <property type="project" value="UniProtKB-SubCell"/>
</dbReference>
<dbReference type="GO" id="GO:0042025">
    <property type="term" value="C:host cell nucleus"/>
    <property type="evidence" value="ECO:0007669"/>
    <property type="project" value="UniProtKB-SubCell"/>
</dbReference>
<dbReference type="GO" id="GO:0003677">
    <property type="term" value="F:DNA binding"/>
    <property type="evidence" value="ECO:0007669"/>
    <property type="project" value="UniProtKB-KW"/>
</dbReference>
<dbReference type="GO" id="GO:0052040">
    <property type="term" value="P:symbiont-mediated perturbation of host programmed cell death"/>
    <property type="evidence" value="ECO:0007669"/>
    <property type="project" value="UniProtKB-KW"/>
</dbReference>
<dbReference type="Gene3D" id="6.10.140.500">
    <property type="match status" value="8"/>
</dbReference>
<dbReference type="InterPro" id="IPR005042">
    <property type="entry name" value="TAL_effector_rpt"/>
</dbReference>
<dbReference type="InterPro" id="IPR053450">
    <property type="entry name" value="TALE"/>
</dbReference>
<dbReference type="NCBIfam" id="NF041308">
    <property type="entry name" value="AvrBs3"/>
    <property type="match status" value="2"/>
</dbReference>
<dbReference type="Pfam" id="PF03377">
    <property type="entry name" value="TAL_effector"/>
    <property type="match status" value="17"/>
</dbReference>
<reference key="1">
    <citation type="journal article" date="1992" name="Mol. Plant Microbe Interact.">
        <title>Identification of a family of avirulence genes from Xanthomonas oryzae pv. oryzae.</title>
        <authorList>
            <person name="Hopkins C.M."/>
            <person name="White F.F."/>
            <person name="Choi S.H."/>
            <person name="Guo A."/>
            <person name="Leach J.E."/>
        </authorList>
    </citation>
    <scope>NUCLEOTIDE SEQUENCE [GENOMIC DNA]</scope>
    <scope>FUNCTION</scope>
    <scope>REPEAT</scope>
    <source>
        <strain evidence="10">PXO86</strain>
    </source>
</reference>
<reference key="2">
    <citation type="journal article" date="1998" name="Mol. Plant Microbe Interact.">
        <title>AvrXa10 contains an acidic transcriptional activation domain in the functionally conserved C terminus.</title>
        <authorList>
            <person name="Zhu W.G."/>
            <person name="Yang B."/>
            <person name="Chittoor J.M."/>
            <person name="Johnson L.B."/>
            <person name="White F.F."/>
        </authorList>
    </citation>
    <scope>ACTIVATION DOMAIN</scope>
    <scope>MUTAGENESIS OF 1064-GLU--THR-1101</scope>
</reference>
<reference key="3">
    <citation type="journal article" date="2014" name="Biochem. J.">
        <title>TALEN-mediated genome editing: prospects and perspectives.</title>
        <authorList>
            <person name="Wright D.A."/>
            <person name="Li T."/>
            <person name="Yang B."/>
            <person name="Spalding M.H."/>
        </authorList>
    </citation>
    <scope>BIOTECHNOLOGY USES REVIEW</scope>
</reference>
<reference key="4">
    <citation type="journal article" date="2014" name="Plant J.">
        <title>From dead leaf, to new life: TAL effectors as tools for synthetic biology.</title>
        <authorList>
            <person name="de Lange O."/>
            <person name="Binder A."/>
            <person name="Lahaye T."/>
        </authorList>
    </citation>
    <scope>BIOTECHNOLOGY USES REVIEW</scope>
</reference>
<feature type="chain" id="PRO_0000430622" description="Avirulence protein AvrXa10">
    <location>
        <begin position="1"/>
        <end position="1102"/>
    </location>
</feature>
<feature type="repeat" description="Core repeat 1" evidence="5">
    <location>
        <begin position="288"/>
        <end position="321"/>
    </location>
</feature>
<feature type="repeat" description="Core repeat 2" evidence="5">
    <location>
        <begin position="322"/>
        <end position="355"/>
    </location>
</feature>
<feature type="repeat" description="Core repeat 3" evidence="5">
    <location>
        <begin position="356"/>
        <end position="389"/>
    </location>
</feature>
<feature type="repeat" description="Core repeat 4" evidence="5">
    <location>
        <begin position="390"/>
        <end position="423"/>
    </location>
</feature>
<feature type="repeat" description="Core repeat 5" evidence="5">
    <location>
        <begin position="424"/>
        <end position="457"/>
    </location>
</feature>
<feature type="repeat" description="Core repeat 6" evidence="5">
    <location>
        <begin position="458"/>
        <end position="491"/>
    </location>
</feature>
<feature type="repeat" description="Core repeat 7" evidence="5">
    <location>
        <begin position="492"/>
        <end position="525"/>
    </location>
</feature>
<feature type="repeat" description="Core repeat 8" evidence="5">
    <location>
        <begin position="526"/>
        <end position="559"/>
    </location>
</feature>
<feature type="repeat" description="Core repeat 9" evidence="5">
    <location>
        <begin position="560"/>
        <end position="593"/>
    </location>
</feature>
<feature type="repeat" description="Core repeat 10" evidence="5">
    <location>
        <begin position="594"/>
        <end position="627"/>
    </location>
</feature>
<feature type="repeat" description="Core repeat 11" evidence="5">
    <location>
        <begin position="628"/>
        <end position="661"/>
    </location>
</feature>
<feature type="repeat" description="Core repeat 12" evidence="5">
    <location>
        <begin position="662"/>
        <end position="695"/>
    </location>
</feature>
<feature type="repeat" description="Core repeat 13" evidence="5">
    <location>
        <begin position="696"/>
        <end position="729"/>
    </location>
</feature>
<feature type="repeat" description="Core repeat 14" evidence="5">
    <location>
        <begin position="730"/>
        <end position="763"/>
    </location>
</feature>
<feature type="repeat" description="Core repeat 15" evidence="5">
    <location>
        <begin position="764"/>
        <end position="797"/>
    </location>
</feature>
<feature type="repeat" description="Core repeat 15.5" evidence="5">
    <location>
        <begin position="798"/>
        <end position="809"/>
    </location>
</feature>
<feature type="region of interest" description="Disordered" evidence="2">
    <location>
        <begin position="1"/>
        <end position="68"/>
    </location>
</feature>
<feature type="region of interest" description="Disordered" evidence="2">
    <location>
        <begin position="127"/>
        <end position="151"/>
    </location>
</feature>
<feature type="region of interest" description="Disordered" evidence="2">
    <location>
        <begin position="978"/>
        <end position="1021"/>
    </location>
</feature>
<feature type="region of interest" description="Activation domain" evidence="8">
    <location>
        <begin position="1063"/>
        <end position="1093"/>
    </location>
</feature>
<feature type="short sequence motif" description="Nuclear localization sequence A (NLSA)" evidence="8">
    <location>
        <begin position="951"/>
        <end position="954"/>
    </location>
</feature>
<feature type="short sequence motif" description="Nuclear localization sequence B (NLSB)" evidence="8">
    <location>
        <begin position="997"/>
        <end position="1000"/>
    </location>
</feature>
<feature type="short sequence motif" description="Nuclear localization sequence C (NLSC)" evidence="8">
    <location>
        <begin position="1034"/>
        <end position="1037"/>
    </location>
</feature>
<feature type="compositionally biased region" description="Basic residues" evidence="2">
    <location>
        <begin position="130"/>
        <end position="140"/>
    </location>
</feature>
<feature type="compositionally biased region" description="Low complexity" evidence="2">
    <location>
        <begin position="141"/>
        <end position="151"/>
    </location>
</feature>
<feature type="compositionally biased region" description="Basic and acidic residues" evidence="2">
    <location>
        <begin position="978"/>
        <end position="990"/>
    </location>
</feature>
<feature type="mutagenesis site" description="No hypersensitive response (HR) activity in planta, no reporter gene activation." evidence="4">
    <location>
        <begin position="1064"/>
        <end position="1101"/>
    </location>
</feature>
<protein>
    <recommendedName>
        <fullName evidence="9">Avirulence protein AvrXa10</fullName>
    </recommendedName>
    <alternativeName>
        <fullName evidence="9">TAL effector protein AvrXa10</fullName>
    </alternativeName>
</protein>
<name>AVX10_XANOO</name>
<evidence type="ECO:0000250" key="1">
    <source>
        <dbReference type="UniProtKB" id="P14727"/>
    </source>
</evidence>
<evidence type="ECO:0000256" key="2">
    <source>
        <dbReference type="SAM" id="MobiDB-lite"/>
    </source>
</evidence>
<evidence type="ECO:0000269" key="3">
    <source>
    </source>
</evidence>
<evidence type="ECO:0000269" key="4">
    <source>
    </source>
</evidence>
<evidence type="ECO:0000303" key="5">
    <source>
    </source>
</evidence>
<evidence type="ECO:0000303" key="6">
    <source>
    </source>
</evidence>
<evidence type="ECO:0000303" key="7">
    <source>
    </source>
</evidence>
<evidence type="ECO:0000303" key="8">
    <source>
    </source>
</evidence>
<evidence type="ECO:0000305" key="9"/>
<evidence type="ECO:0000312" key="10">
    <source>
        <dbReference type="EMBL" id="AAA92974.1"/>
    </source>
</evidence>
<proteinExistence type="evidence at protein level"/>
<comment type="function">
    <text evidence="1 3">Avirulence protein. Induces the hypersensitive response (HR)in rice plants carrying the resistance gene Xa10. Activity depends on the presence of the core repeat domains; replacement with repeat domains from other proteins (AvrBs3 of X.euvesicatoria (AC P14727) or AvrXa7 of this organism) does not elicit the HR. Probably acts as a transcription factor in its host plant (rice) to induce plant resistance or disease.</text>
</comment>
<comment type="subcellular location">
    <subcellularLocation>
        <location evidence="1">Secreted</location>
    </subcellularLocation>
    <subcellularLocation>
        <location evidence="1">Host nucleus</location>
    </subcellularLocation>
    <text evidence="1">Secreted via a type III secretions system (T3SS). Localizes to the plant cell nucleus.</text>
</comment>
<comment type="domain">
    <text evidence="1">The central DNA-binding region is composed of 23.5 tandem core repeats with 1 base-specifying residue (BSR residue 13, also called repeat variable diresidue, RVD, residues 12 and 13) each of which recognizes 1 base in the target DNA. The BSR is probably the only residue which contacts DNA in a sequence-specific manner.</text>
</comment>
<comment type="domain">
    <text evidence="4">The activation domain activates transcription of a reporter gene upon expression in planta and in yeast. The 3 putative nuclear localization signals seem to be highly redundant; only mutation of all 3 knocks out the HR.</text>
</comment>
<comment type="biotechnology">
    <text evidence="6 7">By combining the central DNA-binding domain with the catalytic domain of the restriction endonuclease FokI, TALE-nuclease (TALEN) enzymes able to target specific dsDNA sequences can be created that enable eukaryotic genome modification. Other potential uses as transcriptional repressors, for transposon targeting, DNA methylation or histone tail modifictions are also possible.</text>
</comment>
<comment type="similarity">
    <text evidence="9">Belongs to the transcription activator-like effector (TALE) family.</text>
</comment>
<accession>Q56830</accession>
<organism>
    <name type="scientific">Xanthomonas oryzae pv. oryzae</name>
    <dbReference type="NCBI Taxonomy" id="64187"/>
    <lineage>
        <taxon>Bacteria</taxon>
        <taxon>Pseudomonadati</taxon>
        <taxon>Pseudomonadota</taxon>
        <taxon>Gammaproteobacteria</taxon>
        <taxon>Lysobacterales</taxon>
        <taxon>Lysobacteraceae</taxon>
        <taxon>Xanthomonas</taxon>
    </lineage>
</organism>